<gene>
    <name evidence="1" type="primary">PET112</name>
    <name type="ordered locus">YALI0E09240g</name>
</gene>
<proteinExistence type="inferred from homology"/>
<protein>
    <recommendedName>
        <fullName evidence="1">Glutamyl-tRNA(Gln) amidotransferase subunit B, mitochondrial</fullName>
        <shortName evidence="1">Glu-AdT subunit B</shortName>
        <ecNumber evidence="1">6.3.5.-</ecNumber>
    </recommendedName>
</protein>
<accession>Q6C6I6</accession>
<feature type="transit peptide" description="Mitochondrion" evidence="1">
    <location>
        <begin position="1"/>
        <end position="23"/>
    </location>
</feature>
<feature type="chain" id="PRO_0000413285" description="Glutamyl-tRNA(Gln) amidotransferase subunit B, mitochondrial">
    <location>
        <begin position="24"/>
        <end position="549"/>
    </location>
</feature>
<evidence type="ECO:0000255" key="1">
    <source>
        <dbReference type="HAMAP-Rule" id="MF_03147"/>
    </source>
</evidence>
<sequence>MLRISRDTKIVARVTHVTKSRTYATSTAPKLVVGLEIHTQLLTKRKLFSSTTVPSLSTTPNTKVSYFDAALPGTQPRLNPQALLLALKAAIALRCDVKELTAFDRKHYFYPDQPAGYQITQHRKPLAINGKLKLNWWDLYSQNEWPALLAKEANTDSADTRDLASRSIDVPILQIQLEQDTGKSTYHGSETLVDLNRTNMPLIEIVTAPVIHTASHAAAFVKKLQTLLKRIGVSTGEFESGAMRVDVNVSIGEDGERCEIKNLPNTSSIEAAIEAEYNRQVELVGKGGTVEKSTMGFDGKKTFILRSKENAVDYRYMPDPELPLIRLSKGTLLKVRDSLPELPDKVFSRLTDDPYYVTTKDALTLIHVAGLSDYYFEVFERVSEETEDAKALKQPVNWVVNELLGRVRKADEARAAESAESGEPDLGAHDYNSIYPPAKLAELILAVHNHQLTLPSARLLFQHFLANPEDLKNMTIEQAITEFELGESGDVVDACRQVINEHESVVKSVKDGSKPGSIKFLIGMVMKATQGRINPAVIERQLKTEMRHM</sequence>
<dbReference type="EC" id="6.3.5.-" evidence="1"/>
<dbReference type="EMBL" id="CR382131">
    <property type="protein sequence ID" value="CAG79316.1"/>
    <property type="molecule type" value="Genomic_DNA"/>
</dbReference>
<dbReference type="RefSeq" id="XP_503726.1">
    <property type="nucleotide sequence ID" value="XM_503726.1"/>
</dbReference>
<dbReference type="SMR" id="Q6C6I6"/>
<dbReference type="FunCoup" id="Q6C6I6">
    <property type="interactions" value="383"/>
</dbReference>
<dbReference type="STRING" id="284591.Q6C6I6"/>
<dbReference type="EnsemblFungi" id="CAG79316">
    <property type="protein sequence ID" value="CAG79316"/>
    <property type="gene ID" value="YALI0_E09240g"/>
</dbReference>
<dbReference type="KEGG" id="yli:2912526"/>
<dbReference type="VEuPathDB" id="FungiDB:YALI0_E09240g"/>
<dbReference type="HOGENOM" id="CLU_019240_4_0_1"/>
<dbReference type="InParanoid" id="Q6C6I6"/>
<dbReference type="OMA" id="FELMFKE"/>
<dbReference type="OrthoDB" id="117376at4891"/>
<dbReference type="Proteomes" id="UP000001300">
    <property type="component" value="Chromosome E"/>
</dbReference>
<dbReference type="GO" id="GO:0030956">
    <property type="term" value="C:glutamyl-tRNA(Gln) amidotransferase complex"/>
    <property type="evidence" value="ECO:0000318"/>
    <property type="project" value="GO_Central"/>
</dbReference>
<dbReference type="GO" id="GO:0005739">
    <property type="term" value="C:mitochondrion"/>
    <property type="evidence" value="ECO:0000318"/>
    <property type="project" value="GO_Central"/>
</dbReference>
<dbReference type="GO" id="GO:0005524">
    <property type="term" value="F:ATP binding"/>
    <property type="evidence" value="ECO:0007669"/>
    <property type="project" value="UniProtKB-KW"/>
</dbReference>
<dbReference type="GO" id="GO:0050567">
    <property type="term" value="F:glutaminyl-tRNA synthase (glutamine-hydrolyzing) activity"/>
    <property type="evidence" value="ECO:0000318"/>
    <property type="project" value="GO_Central"/>
</dbReference>
<dbReference type="GO" id="GO:0070681">
    <property type="term" value="P:glutaminyl-tRNAGln biosynthesis via transamidation"/>
    <property type="evidence" value="ECO:0000318"/>
    <property type="project" value="GO_Central"/>
</dbReference>
<dbReference type="GO" id="GO:0032543">
    <property type="term" value="P:mitochondrial translation"/>
    <property type="evidence" value="ECO:0000318"/>
    <property type="project" value="GO_Central"/>
</dbReference>
<dbReference type="FunFam" id="1.10.10.410:FF:000001">
    <property type="entry name" value="Aspartyl/glutamyl-tRNA(Asn/Gln) amidotransferase subunit B"/>
    <property type="match status" value="1"/>
</dbReference>
<dbReference type="Gene3D" id="1.10.10.410">
    <property type="match status" value="1"/>
</dbReference>
<dbReference type="HAMAP" id="MF_00121">
    <property type="entry name" value="GatB"/>
    <property type="match status" value="1"/>
</dbReference>
<dbReference type="InterPro" id="IPR017959">
    <property type="entry name" value="Asn/Gln-tRNA_amidoTrfase_suB/E"/>
</dbReference>
<dbReference type="InterPro" id="IPR006075">
    <property type="entry name" value="Asn/Gln-tRNA_Trfase_suB/E_cat"/>
</dbReference>
<dbReference type="InterPro" id="IPR018027">
    <property type="entry name" value="Asn/Gln_amidotransferase"/>
</dbReference>
<dbReference type="InterPro" id="IPR003789">
    <property type="entry name" value="Asn/Gln_tRNA_amidoTrase-B-like"/>
</dbReference>
<dbReference type="InterPro" id="IPR004413">
    <property type="entry name" value="GatB"/>
</dbReference>
<dbReference type="InterPro" id="IPR023168">
    <property type="entry name" value="GatB_Yqey_C_2"/>
</dbReference>
<dbReference type="InterPro" id="IPR017958">
    <property type="entry name" value="Gln-tRNA_amidoTrfase_suB_CS"/>
</dbReference>
<dbReference type="InterPro" id="IPR014746">
    <property type="entry name" value="Gln_synth/guanido_kin_cat_dom"/>
</dbReference>
<dbReference type="NCBIfam" id="TIGR00133">
    <property type="entry name" value="gatB"/>
    <property type="match status" value="1"/>
</dbReference>
<dbReference type="NCBIfam" id="NF004012">
    <property type="entry name" value="PRK05477.1-2"/>
    <property type="match status" value="1"/>
</dbReference>
<dbReference type="PANTHER" id="PTHR11659">
    <property type="entry name" value="GLUTAMYL-TRNA GLN AMIDOTRANSFERASE SUBUNIT B MITOCHONDRIAL AND PROKARYOTIC PET112-RELATED"/>
    <property type="match status" value="1"/>
</dbReference>
<dbReference type="PANTHER" id="PTHR11659:SF0">
    <property type="entry name" value="GLUTAMYL-TRNA(GLN) AMIDOTRANSFERASE SUBUNIT B, MITOCHONDRIAL"/>
    <property type="match status" value="1"/>
</dbReference>
<dbReference type="Pfam" id="PF02934">
    <property type="entry name" value="GatB_N"/>
    <property type="match status" value="1"/>
</dbReference>
<dbReference type="Pfam" id="PF02637">
    <property type="entry name" value="GatB_Yqey"/>
    <property type="match status" value="1"/>
</dbReference>
<dbReference type="SMART" id="SM00845">
    <property type="entry name" value="GatB_Yqey"/>
    <property type="match status" value="1"/>
</dbReference>
<dbReference type="SUPFAM" id="SSF89095">
    <property type="entry name" value="GatB/YqeY motif"/>
    <property type="match status" value="1"/>
</dbReference>
<dbReference type="SUPFAM" id="SSF55931">
    <property type="entry name" value="Glutamine synthetase/guanido kinase"/>
    <property type="match status" value="1"/>
</dbReference>
<dbReference type="PROSITE" id="PS01234">
    <property type="entry name" value="GATB"/>
    <property type="match status" value="1"/>
</dbReference>
<keyword id="KW-0067">ATP-binding</keyword>
<keyword id="KW-0436">Ligase</keyword>
<keyword id="KW-0496">Mitochondrion</keyword>
<keyword id="KW-0547">Nucleotide-binding</keyword>
<keyword id="KW-0648">Protein biosynthesis</keyword>
<keyword id="KW-1185">Reference proteome</keyword>
<keyword id="KW-0809">Transit peptide</keyword>
<comment type="function">
    <text evidence="1">Allows the formation of correctly charged Gln-tRNA(Gln) through the transamidation of misacylated Glu-tRNA(Gln) in the mitochondria. The reaction takes place in the presence of glutamine and ATP through an activated gamma-phospho-Glu-tRNA(Gln).</text>
</comment>
<comment type="catalytic activity">
    <reaction evidence="1">
        <text>L-glutamyl-tRNA(Gln) + L-glutamine + ATP + H2O = L-glutaminyl-tRNA(Gln) + L-glutamate + ADP + phosphate + H(+)</text>
        <dbReference type="Rhea" id="RHEA:17521"/>
        <dbReference type="Rhea" id="RHEA-COMP:9681"/>
        <dbReference type="Rhea" id="RHEA-COMP:9684"/>
        <dbReference type="ChEBI" id="CHEBI:15377"/>
        <dbReference type="ChEBI" id="CHEBI:15378"/>
        <dbReference type="ChEBI" id="CHEBI:29985"/>
        <dbReference type="ChEBI" id="CHEBI:30616"/>
        <dbReference type="ChEBI" id="CHEBI:43474"/>
        <dbReference type="ChEBI" id="CHEBI:58359"/>
        <dbReference type="ChEBI" id="CHEBI:78520"/>
        <dbReference type="ChEBI" id="CHEBI:78521"/>
        <dbReference type="ChEBI" id="CHEBI:456216"/>
    </reaction>
</comment>
<comment type="subunit">
    <text evidence="1">Subunit of the heterotrimeric GatFAB amidotransferase (AdT) complex, composed of A, B and F subunits.</text>
</comment>
<comment type="subcellular location">
    <subcellularLocation>
        <location evidence="1">Mitochondrion</location>
    </subcellularLocation>
</comment>
<comment type="similarity">
    <text evidence="1">Belongs to the GatB/GatE family. GatB subfamily.</text>
</comment>
<reference key="1">
    <citation type="journal article" date="2004" name="Nature">
        <title>Genome evolution in yeasts.</title>
        <authorList>
            <person name="Dujon B."/>
            <person name="Sherman D."/>
            <person name="Fischer G."/>
            <person name="Durrens P."/>
            <person name="Casaregola S."/>
            <person name="Lafontaine I."/>
            <person name="de Montigny J."/>
            <person name="Marck C."/>
            <person name="Neuveglise C."/>
            <person name="Talla E."/>
            <person name="Goffard N."/>
            <person name="Frangeul L."/>
            <person name="Aigle M."/>
            <person name="Anthouard V."/>
            <person name="Babour A."/>
            <person name="Barbe V."/>
            <person name="Barnay S."/>
            <person name="Blanchin S."/>
            <person name="Beckerich J.-M."/>
            <person name="Beyne E."/>
            <person name="Bleykasten C."/>
            <person name="Boisrame A."/>
            <person name="Boyer J."/>
            <person name="Cattolico L."/>
            <person name="Confanioleri F."/>
            <person name="de Daruvar A."/>
            <person name="Despons L."/>
            <person name="Fabre E."/>
            <person name="Fairhead C."/>
            <person name="Ferry-Dumazet H."/>
            <person name="Groppi A."/>
            <person name="Hantraye F."/>
            <person name="Hennequin C."/>
            <person name="Jauniaux N."/>
            <person name="Joyet P."/>
            <person name="Kachouri R."/>
            <person name="Kerrest A."/>
            <person name="Koszul R."/>
            <person name="Lemaire M."/>
            <person name="Lesur I."/>
            <person name="Ma L."/>
            <person name="Muller H."/>
            <person name="Nicaud J.-M."/>
            <person name="Nikolski M."/>
            <person name="Oztas S."/>
            <person name="Ozier-Kalogeropoulos O."/>
            <person name="Pellenz S."/>
            <person name="Potier S."/>
            <person name="Richard G.-F."/>
            <person name="Straub M.-L."/>
            <person name="Suleau A."/>
            <person name="Swennen D."/>
            <person name="Tekaia F."/>
            <person name="Wesolowski-Louvel M."/>
            <person name="Westhof E."/>
            <person name="Wirth B."/>
            <person name="Zeniou-Meyer M."/>
            <person name="Zivanovic Y."/>
            <person name="Bolotin-Fukuhara M."/>
            <person name="Thierry A."/>
            <person name="Bouchier C."/>
            <person name="Caudron B."/>
            <person name="Scarpelli C."/>
            <person name="Gaillardin C."/>
            <person name="Weissenbach J."/>
            <person name="Wincker P."/>
            <person name="Souciet J.-L."/>
        </authorList>
    </citation>
    <scope>NUCLEOTIDE SEQUENCE [LARGE SCALE GENOMIC DNA]</scope>
    <source>
        <strain>CLIB 122 / E 150</strain>
    </source>
</reference>
<name>GATB_YARLI</name>
<organism>
    <name type="scientific">Yarrowia lipolytica (strain CLIB 122 / E 150)</name>
    <name type="common">Yeast</name>
    <name type="synonym">Candida lipolytica</name>
    <dbReference type="NCBI Taxonomy" id="284591"/>
    <lineage>
        <taxon>Eukaryota</taxon>
        <taxon>Fungi</taxon>
        <taxon>Dikarya</taxon>
        <taxon>Ascomycota</taxon>
        <taxon>Saccharomycotina</taxon>
        <taxon>Dipodascomycetes</taxon>
        <taxon>Dipodascales</taxon>
        <taxon>Dipodascales incertae sedis</taxon>
        <taxon>Yarrowia</taxon>
    </lineage>
</organism>